<feature type="chain" id="PRO_0000442316" description="Methylcytosine dioxygenase tet3-B">
    <location>
        <begin position="1"/>
        <end position="1915"/>
    </location>
</feature>
<feature type="zinc finger region" description="CXXC-type" evidence="4">
    <location>
        <begin position="61"/>
        <end position="102"/>
    </location>
</feature>
<feature type="region of interest" description="Disordered" evidence="5">
    <location>
        <begin position="28"/>
        <end position="49"/>
    </location>
</feature>
<feature type="region of interest" description="Disordered" evidence="5">
    <location>
        <begin position="629"/>
        <end position="679"/>
    </location>
</feature>
<feature type="region of interest" description="Disordered" evidence="5">
    <location>
        <begin position="776"/>
        <end position="806"/>
    </location>
</feature>
<feature type="region of interest" description="Disordered" evidence="5">
    <location>
        <begin position="831"/>
        <end position="880"/>
    </location>
</feature>
<feature type="region of interest" description="Disordered" evidence="5">
    <location>
        <begin position="1298"/>
        <end position="1356"/>
    </location>
</feature>
<feature type="region of interest" description="Disordered" evidence="5">
    <location>
        <begin position="1469"/>
        <end position="1516"/>
    </location>
</feature>
<feature type="region of interest" description="Disordered" evidence="5">
    <location>
        <begin position="1719"/>
        <end position="1753"/>
    </location>
</feature>
<feature type="coiled-coil region" evidence="3">
    <location>
        <begin position="1827"/>
        <end position="1860"/>
    </location>
</feature>
<feature type="compositionally biased region" description="Polar residues" evidence="5">
    <location>
        <begin position="629"/>
        <end position="638"/>
    </location>
</feature>
<feature type="compositionally biased region" description="Basic residues" evidence="5">
    <location>
        <begin position="664"/>
        <end position="676"/>
    </location>
</feature>
<feature type="compositionally biased region" description="Low complexity" evidence="5">
    <location>
        <begin position="779"/>
        <end position="793"/>
    </location>
</feature>
<feature type="compositionally biased region" description="Polar residues" evidence="5">
    <location>
        <begin position="838"/>
        <end position="854"/>
    </location>
</feature>
<feature type="compositionally biased region" description="Polar residues" evidence="5">
    <location>
        <begin position="864"/>
        <end position="880"/>
    </location>
</feature>
<feature type="compositionally biased region" description="Basic and acidic residues" evidence="5">
    <location>
        <begin position="1308"/>
        <end position="1339"/>
    </location>
</feature>
<feature type="compositionally biased region" description="Polar residues" evidence="5">
    <location>
        <begin position="1340"/>
        <end position="1355"/>
    </location>
</feature>
<feature type="compositionally biased region" description="Basic and acidic residues" evidence="5">
    <location>
        <begin position="1482"/>
        <end position="1491"/>
    </location>
</feature>
<feature type="compositionally biased region" description="Polar residues" evidence="5">
    <location>
        <begin position="1494"/>
        <end position="1503"/>
    </location>
</feature>
<feature type="compositionally biased region" description="Polar residues" evidence="5">
    <location>
        <begin position="1720"/>
        <end position="1732"/>
    </location>
</feature>
<feature type="binding site" evidence="4">
    <location>
        <position position="68"/>
    </location>
    <ligand>
        <name>Zn(2+)</name>
        <dbReference type="ChEBI" id="CHEBI:29105"/>
        <label>1</label>
    </ligand>
</feature>
<feature type="binding site" evidence="4">
    <location>
        <position position="71"/>
    </location>
    <ligand>
        <name>Zn(2+)</name>
        <dbReference type="ChEBI" id="CHEBI:29105"/>
        <label>1</label>
    </ligand>
</feature>
<feature type="binding site" evidence="4">
    <location>
        <position position="74"/>
    </location>
    <ligand>
        <name>Zn(2+)</name>
        <dbReference type="ChEBI" id="CHEBI:29105"/>
        <label>1</label>
    </ligand>
</feature>
<feature type="binding site" evidence="4">
    <location>
        <position position="80"/>
    </location>
    <ligand>
        <name>Zn(2+)</name>
        <dbReference type="ChEBI" id="CHEBI:29105"/>
        <label>2</label>
    </ligand>
</feature>
<feature type="binding site" evidence="4">
    <location>
        <position position="83"/>
    </location>
    <ligand>
        <name>Zn(2+)</name>
        <dbReference type="ChEBI" id="CHEBI:29105"/>
        <label>2</label>
    </ligand>
</feature>
<feature type="binding site" evidence="4">
    <location>
        <position position="86"/>
    </location>
    <ligand>
        <name>Zn(2+)</name>
        <dbReference type="ChEBI" id="CHEBI:29105"/>
        <label>2</label>
    </ligand>
</feature>
<feature type="binding site" evidence="4">
    <location>
        <position position="96"/>
    </location>
    <ligand>
        <name>Zn(2+)</name>
        <dbReference type="ChEBI" id="CHEBI:29105"/>
        <label>2</label>
    </ligand>
</feature>
<feature type="binding site" evidence="4">
    <location>
        <position position="101"/>
    </location>
    <ligand>
        <name>Zn(2+)</name>
        <dbReference type="ChEBI" id="CHEBI:29105"/>
        <label>1</label>
    </ligand>
</feature>
<feature type="binding site" evidence="2">
    <location>
        <position position="974"/>
    </location>
    <ligand>
        <name>Zn(2+)</name>
        <dbReference type="ChEBI" id="CHEBI:29105"/>
        <label>3</label>
    </ligand>
</feature>
<feature type="binding site" evidence="2">
    <location>
        <position position="976"/>
    </location>
    <ligand>
        <name>Zn(2+)</name>
        <dbReference type="ChEBI" id="CHEBI:29105"/>
        <label>3</label>
    </ligand>
</feature>
<feature type="binding site" evidence="2">
    <location>
        <position position="1034"/>
    </location>
    <ligand>
        <name>Zn(2+)</name>
        <dbReference type="ChEBI" id="CHEBI:29105"/>
        <label>4</label>
    </ligand>
</feature>
<feature type="binding site" evidence="2">
    <location>
        <position position="1060"/>
    </location>
    <ligand>
        <name>Zn(2+)</name>
        <dbReference type="ChEBI" id="CHEBI:29105"/>
        <label>1</label>
    </ligand>
</feature>
<feature type="binding site" evidence="2">
    <location>
        <position position="1062"/>
    </location>
    <ligand>
        <name>Zn(2+)</name>
        <dbReference type="ChEBI" id="CHEBI:29105"/>
        <label>3</label>
    </ligand>
</feature>
<feature type="binding site" evidence="2">
    <location>
        <position position="1102"/>
    </location>
    <ligand>
        <name>2-oxoglutarate</name>
        <dbReference type="ChEBI" id="CHEBI:16810"/>
    </ligand>
</feature>
<feature type="binding site" evidence="2">
    <location>
        <position position="1112"/>
    </location>
    <ligand>
        <name>Zn(2+)</name>
        <dbReference type="ChEBI" id="CHEBI:29105"/>
        <label>4</label>
    </ligand>
</feature>
<feature type="binding site" evidence="2">
    <location>
        <position position="1114"/>
    </location>
    <ligand>
        <name>Zn(2+)</name>
        <dbReference type="ChEBI" id="CHEBI:29105"/>
        <label>4</label>
    </ligand>
</feature>
<feature type="binding site" evidence="2">
    <location>
        <position position="1130"/>
    </location>
    <ligand>
        <name>Zn(2+)</name>
        <dbReference type="ChEBI" id="CHEBI:29105"/>
        <label>3</label>
    </ligand>
</feature>
<feature type="binding site" evidence="2">
    <location>
        <position position="1139"/>
    </location>
    <ligand>
        <name>Zn(2+)</name>
        <dbReference type="ChEBI" id="CHEBI:29105"/>
        <label>3</label>
    </ligand>
</feature>
<feature type="binding site" evidence="2">
    <location>
        <position position="1199"/>
    </location>
    <ligand>
        <name>Zn(2+)</name>
        <dbReference type="ChEBI" id="CHEBI:29105"/>
        <label>3</label>
    </ligand>
</feature>
<feature type="binding site" evidence="2">
    <location>
        <position position="1215"/>
    </location>
    <ligand>
        <name>2-oxoglutarate</name>
        <dbReference type="ChEBI" id="CHEBI:16810"/>
    </ligand>
</feature>
<feature type="binding site" evidence="2">
    <location>
        <position position="1221"/>
    </location>
    <ligand>
        <name>Zn(2+)</name>
        <dbReference type="ChEBI" id="CHEBI:29105"/>
        <label>2</label>
    </ligand>
</feature>
<feature type="binding site" evidence="2">
    <location>
        <position position="1223"/>
    </location>
    <ligand>
        <name>Fe cation</name>
        <dbReference type="ChEBI" id="CHEBI:24875"/>
        <note>catalytic</note>
    </ligand>
</feature>
<feature type="binding site" evidence="2">
    <location>
        <position position="1225"/>
    </location>
    <ligand>
        <name>Fe cation</name>
        <dbReference type="ChEBI" id="CHEBI:24875"/>
        <note>catalytic</note>
    </ligand>
</feature>
<feature type="binding site" evidence="2">
    <location>
        <position position="1257"/>
    </location>
    <ligand>
        <name>2-oxoglutarate</name>
        <dbReference type="ChEBI" id="CHEBI:16810"/>
    </ligand>
</feature>
<feature type="binding site" evidence="2">
    <location>
        <position position="1794"/>
    </location>
    <ligand>
        <name>Fe cation</name>
        <dbReference type="ChEBI" id="CHEBI:24875"/>
        <note>catalytic</note>
    </ligand>
</feature>
<feature type="binding site" evidence="2">
    <location>
        <begin position="1809"/>
        <end position="1811"/>
    </location>
    <ligand>
        <name>2-oxoglutarate</name>
        <dbReference type="ChEBI" id="CHEBI:16810"/>
    </ligand>
</feature>
<accession>K9JHZ4</accession>
<sequence>METQPASVPCVLPQDVYEFSEDRESLGRLRVSEMPSELNGGGDGSKGDGAAVVATEVSQQSNKKRKRCGVCVPCLRKEPCGTCYNCVNRSTSHQICKMRKCEQLKKKRVVPMKGVEAVDKDDAKNQAKEQVPSVKNCSESILVDGPKTDQMEAGPVNHVQEGRLKQECDSTLPSKGSEDLANQLLMEANSWLSNTAAPQDPCNKLNWDKPIIPNHIAANNNSNLEDAKNLVAFSAVAEAMSNYGMPASGTPSSISMQLYEKFNYETNQDNSGHSEGNAPSCPEDLNTLKEALALAKHGVKPPNCNCDGPECPDYLEWLENKIKSTGKGSQESPFPSLGQVSKKLVQKSYHKEQVLNLENTNVTCPSGNLPFSQNALSLAKEKNISLQTAIAIEALTQLSSALPQTNNEYPNAPSQPLINHNDQLTHFPTAKGNQLPMLPLSCNELFQNQQAQLYTGKNALPVPQSPRQASWEQNKKPGYQESEYIPENLSQSSSVLPSDASTPQKKEFLQQWVQNADLLKSPSDPMTGLKQLLGNTDEYIKSAFKGPEGLSKKIKNVKSKHTIKSIKKESADFTKMSPDQQLSQLLQGNDFHRNTQAALQQHLHHKRNLFVDSNTMEACTQEQQNWWVPNSQQAPVSKTTEKPVKERKKRRQSPSQKQVEPKPKPPRKQVQIKKPRVKEGNAVFMPVSQISLDSFRRVEKEENQVKELDLENSLPINVQPDLLGSQSIQLTGSQANLENQKTVNTQETCNENQTSIGKANNFALCVNKTNSLVAKGRCPTPSTGDSSSGQGDSANQHTNLTDVPGQNDLSCIDDKFEDLIKQFAAEFGEDFSLPGSEVPSQNGERPPKQQTSGVPQFKMPFPSQLPSENATHSNPALSNNLLTHNASHKFDSLFSSKSPKQIKIESSGAITVVSTTCSYSEENQHLDGTPTKSELPFNPTLSGFLESPLKYLTSPTKSLIDTPAKMAQAEFPTCDCVEQINEKDEGPYYTHLGSGPTVASIRELMEERFGEKGEAIRIEKVIYTGKEGKSSRGCPIAKWVIRRQSEDEKLMCLVRQRAGHHCENAVIIILIMAWEGIPRALGDSLYDDISGTITKYGNPTSRRCGLNDDRTCACQGKDPNTCGASFSFGCSWSMYFNGCKYARSKTPRKFRLIGDNPKEEEFLKDSFQDLATKVAPVYKMLAPQAYQNQANNEDVAIDCRLGLEEGRPFSGVTACMDFCAHAHKDQHNLYNGCTVVCTLTKEDNRMIGKIAEDEQLHVLPLYKVSTTDEFGSEERQLEKIRKGGIQVLSSFPREVRKLSEPAKSCRQRQLDAKKATAEKKKLQKEKLVSPDKTKQEPSDTKTCQQNPGVPQQQTKPCVKVEPSNHYNTFKYNGNGVVESYSVLGSCRPSDPYSMNSVYSYHSFYAQPNLPSVNGFHSKFALPPFGFYSFPNNPVVPNQFMNYGTGDARNSGWMNNSFEKKPELQSLADGMNQSYGSELPEQNYRRSSEVPHHYSLQNSNSQKSVGVPHRTTPAPMETTPYSNVPCYNKVIKKEPVCDPLVDPFQRSNSVHSQSPGVNHSLQTNDLSYKANGALPSSGRTNKEGPCSMFLPSDKNGLEKRDYFGVHSNVPGLKEKQWTPYGIDVPVGQRDSLDSQCSGKVWSSCKLSDSPAVMPSTVQDKNWTGRQASLNQGVKEPMPFQEKLWNSVAASGRCSTTPNDRSSVTPCAELQDKNWMSFPNPAVNSLKTDSSQNHWDPYSLDDNMDDGQSKSVKEEEDEEEIWSDSEHNFLDGNIGGVAVAPGHGSILIECARRELHATTPLKKPNRCHPTRISLVFYQHKNLNQPNHGLALWEAKMKQLAERARVKEEEAAKLGIKQEVKSLGKKRKWGGAATTETPPVEKKDFIPTRQAATSLTDSTTTAFSYAYTKVTGPYSRFI</sequence>
<name>TET3B_XENLA</name>
<gene>
    <name evidence="8" type="primary">tet3-b</name>
</gene>
<dbReference type="EC" id="1.14.11.80" evidence="6"/>
<dbReference type="EMBL" id="HQ220208">
    <property type="protein sequence ID" value="ADU77106.1"/>
    <property type="molecule type" value="mRNA"/>
</dbReference>
<dbReference type="SMR" id="K9JHZ4"/>
<dbReference type="AGR" id="Xenbase:XB-GENE-17338507"/>
<dbReference type="Xenbase" id="XB-GENE-17338507">
    <property type="gene designation" value="tet3.L"/>
</dbReference>
<dbReference type="Proteomes" id="UP000186698">
    <property type="component" value="Unplaced"/>
</dbReference>
<dbReference type="GO" id="GO:0005694">
    <property type="term" value="C:chromosome"/>
    <property type="evidence" value="ECO:0007669"/>
    <property type="project" value="UniProtKB-SubCell"/>
</dbReference>
<dbReference type="GO" id="GO:0005634">
    <property type="term" value="C:nucleus"/>
    <property type="evidence" value="ECO:0000318"/>
    <property type="project" value="GO_Central"/>
</dbReference>
<dbReference type="GO" id="GO:0070579">
    <property type="term" value="F:5-methylcytosine dioxygenase activity"/>
    <property type="evidence" value="ECO:0000314"/>
    <property type="project" value="ARUK-UCL"/>
</dbReference>
<dbReference type="GO" id="GO:0008327">
    <property type="term" value="F:methyl-CpG binding"/>
    <property type="evidence" value="ECO:0000314"/>
    <property type="project" value="ARUK-UCL"/>
</dbReference>
<dbReference type="GO" id="GO:0000978">
    <property type="term" value="F:RNA polymerase II cis-regulatory region sequence-specific DNA binding"/>
    <property type="evidence" value="ECO:0000316"/>
    <property type="project" value="ARUK-UCL"/>
</dbReference>
<dbReference type="GO" id="GO:0008270">
    <property type="term" value="F:zinc ion binding"/>
    <property type="evidence" value="ECO:0007669"/>
    <property type="project" value="UniProtKB-KW"/>
</dbReference>
<dbReference type="GO" id="GO:0141167">
    <property type="term" value="P:chromosomal 5-methylcytosine DNA demethylation, oxidation pathway"/>
    <property type="evidence" value="ECO:0007669"/>
    <property type="project" value="InterPro"/>
</dbReference>
<dbReference type="GO" id="GO:0001654">
    <property type="term" value="P:eye development"/>
    <property type="evidence" value="ECO:0000316"/>
    <property type="project" value="ARUK-UCL"/>
</dbReference>
<dbReference type="GO" id="GO:0007399">
    <property type="term" value="P:nervous system development"/>
    <property type="evidence" value="ECO:0000316"/>
    <property type="project" value="ARUK-UCL"/>
</dbReference>
<dbReference type="GO" id="GO:0044029">
    <property type="term" value="P:positive regulation of gene expression via chromosomal CpG island demethylation"/>
    <property type="evidence" value="ECO:0000316"/>
    <property type="project" value="ARUK-UCL"/>
</dbReference>
<dbReference type="GO" id="GO:0045944">
    <property type="term" value="P:positive regulation of transcription by RNA polymerase II"/>
    <property type="evidence" value="ECO:0000318"/>
    <property type="project" value="GO_Central"/>
</dbReference>
<dbReference type="CDD" id="cd18897">
    <property type="entry name" value="TET3"/>
    <property type="match status" value="1"/>
</dbReference>
<dbReference type="InterPro" id="IPR024779">
    <property type="entry name" value="2OGFeDO_JBP1/TET_oxygenase_dom"/>
</dbReference>
<dbReference type="InterPro" id="IPR040175">
    <property type="entry name" value="TET1/2/3"/>
</dbReference>
<dbReference type="InterPro" id="IPR046942">
    <property type="entry name" value="TET_oxygenase"/>
</dbReference>
<dbReference type="InterPro" id="IPR002857">
    <property type="entry name" value="Znf_CXXC"/>
</dbReference>
<dbReference type="PANTHER" id="PTHR23358">
    <property type="entry name" value="METHYLCYTOSINE DIOXYGENASE TET"/>
    <property type="match status" value="1"/>
</dbReference>
<dbReference type="PANTHER" id="PTHR23358:SF6">
    <property type="entry name" value="METHYLCYTOSINE DIOXYGENASE TET"/>
    <property type="match status" value="1"/>
</dbReference>
<dbReference type="Pfam" id="PF12851">
    <property type="entry name" value="Tet_JBP"/>
    <property type="match status" value="1"/>
</dbReference>
<dbReference type="Pfam" id="PF02008">
    <property type="entry name" value="zf-CXXC"/>
    <property type="match status" value="1"/>
</dbReference>
<dbReference type="SMART" id="SM01333">
    <property type="entry name" value="Tet_JBP"/>
    <property type="match status" value="1"/>
</dbReference>
<dbReference type="PROSITE" id="PS51058">
    <property type="entry name" value="ZF_CXXC"/>
    <property type="match status" value="1"/>
</dbReference>
<evidence type="ECO:0000250" key="1">
    <source>
        <dbReference type="UniProtKB" id="A0JP82"/>
    </source>
</evidence>
<evidence type="ECO:0000250" key="2">
    <source>
        <dbReference type="UniProtKB" id="Q6N021"/>
    </source>
</evidence>
<evidence type="ECO:0000255" key="3"/>
<evidence type="ECO:0000255" key="4">
    <source>
        <dbReference type="PROSITE-ProRule" id="PRU00509"/>
    </source>
</evidence>
<evidence type="ECO:0000256" key="5">
    <source>
        <dbReference type="SAM" id="MobiDB-lite"/>
    </source>
</evidence>
<evidence type="ECO:0000269" key="6">
    <source>
    </source>
</evidence>
<evidence type="ECO:0000305" key="7"/>
<evidence type="ECO:0000312" key="8">
    <source>
        <dbReference type="EMBL" id="ADU77106.1"/>
    </source>
</evidence>
<organism evidence="8">
    <name type="scientific">Xenopus laevis</name>
    <name type="common">African clawed frog</name>
    <dbReference type="NCBI Taxonomy" id="8355"/>
    <lineage>
        <taxon>Eukaryota</taxon>
        <taxon>Metazoa</taxon>
        <taxon>Chordata</taxon>
        <taxon>Craniata</taxon>
        <taxon>Vertebrata</taxon>
        <taxon>Euteleostomi</taxon>
        <taxon>Amphibia</taxon>
        <taxon>Batrachia</taxon>
        <taxon>Anura</taxon>
        <taxon>Pipoidea</taxon>
        <taxon>Pipidae</taxon>
        <taxon>Xenopodinae</taxon>
        <taxon>Xenopus</taxon>
        <taxon>Xenopus</taxon>
    </lineage>
</organism>
<keyword id="KW-0156">Chromatin regulator</keyword>
<keyword id="KW-0158">Chromosome</keyword>
<keyword id="KW-0175">Coiled coil</keyword>
<keyword id="KW-0217">Developmental protein</keyword>
<keyword id="KW-0223">Dioxygenase</keyword>
<keyword id="KW-0238">DNA-binding</keyword>
<keyword id="KW-0408">Iron</keyword>
<keyword id="KW-0479">Metal-binding</keyword>
<keyword id="KW-0539">Nucleus</keyword>
<keyword id="KW-0560">Oxidoreductase</keyword>
<keyword id="KW-1185">Reference proteome</keyword>
<keyword id="KW-0862">Zinc</keyword>
<keyword id="KW-0863">Zinc-finger</keyword>
<reference evidence="8" key="1">
    <citation type="journal article" date="2012" name="Cell">
        <title>Tet3 CXXC domain and dioxygenase activity cooperatively regulate key genes for Xenopus eye and neural development.</title>
        <authorList>
            <person name="Xu Y."/>
            <person name="Xu C."/>
            <person name="Kato A."/>
            <person name="Tempel W."/>
            <person name="Abreu J.G."/>
            <person name="Bian C."/>
            <person name="Hu Y."/>
            <person name="Hu D."/>
            <person name="Zhao B."/>
            <person name="Cerovina T."/>
            <person name="Diao J."/>
            <person name="Wu F."/>
            <person name="He H.H."/>
            <person name="Cui Q."/>
            <person name="Clark E."/>
            <person name="Ma C."/>
            <person name="Barbara A."/>
            <person name="Veenstra G.J.C."/>
            <person name="Xu G."/>
            <person name="Kaiser U.B."/>
            <person name="Liu X.S."/>
            <person name="Sugrue S.P."/>
            <person name="He X."/>
            <person name="Min J."/>
            <person name="Kato Y."/>
            <person name="Shi Y.G."/>
        </authorList>
    </citation>
    <scope>NUCLEOTIDE SEQUENCE [MRNA]</scope>
    <scope>FUNCTION</scope>
    <scope>CATALYTIC ACTIVITY</scope>
    <scope>DISRUPTION PHENOTYPE</scope>
    <scope>DEVELOPMENTAL STAGE</scope>
    <scope>TISSUE SPECIFICITY</scope>
</reference>
<comment type="function">
    <text evidence="6">Dioxygenase that catalyzes the conversion of the modified genomic base 5-methylcytosine (5mC) into 5-hydroxymethylcytosine (5hmC) and plays a key role in epigenetic chromatin reprogramming during embryonic development. Conversion of 5mC into 5hmC probably constitutes the first step in cytosine demethylation. Selectively binds to the promoter region of target genes and contributes to regulate the expression of numerous developmental genes, including pax6, rax, sox9 and six3. May also contribute to the regulation of target genes in ways that do not require its enzyme activity.</text>
</comment>
<comment type="catalytic activity">
    <reaction evidence="6">
        <text>a 5-methyl-2'-deoxycytidine in DNA + 2-oxoglutarate + O2 = a 5-hydroxymethyl-2'-deoxycytidine in DNA + succinate + CO2</text>
        <dbReference type="Rhea" id="RHEA:52636"/>
        <dbReference type="Rhea" id="RHEA-COMP:11370"/>
        <dbReference type="Rhea" id="RHEA-COMP:13315"/>
        <dbReference type="ChEBI" id="CHEBI:15379"/>
        <dbReference type="ChEBI" id="CHEBI:16526"/>
        <dbReference type="ChEBI" id="CHEBI:16810"/>
        <dbReference type="ChEBI" id="CHEBI:30031"/>
        <dbReference type="ChEBI" id="CHEBI:85454"/>
        <dbReference type="ChEBI" id="CHEBI:136731"/>
        <dbReference type="EC" id="1.14.11.80"/>
    </reaction>
</comment>
<comment type="catalytic activity">
    <reaction evidence="2">
        <text>a 5-hydroxymethyl-2'-deoxycytidine in DNA + 2-oxoglutarate + O2 = a 5-formyl-2'-deoxycytidine in DNA + succinate + CO2 + H2O</text>
        <dbReference type="Rhea" id="RHEA:53828"/>
        <dbReference type="Rhea" id="RHEA-COMP:13315"/>
        <dbReference type="Rhea" id="RHEA-COMP:13656"/>
        <dbReference type="ChEBI" id="CHEBI:15377"/>
        <dbReference type="ChEBI" id="CHEBI:15379"/>
        <dbReference type="ChEBI" id="CHEBI:16526"/>
        <dbReference type="ChEBI" id="CHEBI:16810"/>
        <dbReference type="ChEBI" id="CHEBI:30031"/>
        <dbReference type="ChEBI" id="CHEBI:136731"/>
        <dbReference type="ChEBI" id="CHEBI:137731"/>
        <dbReference type="EC" id="1.14.11.80"/>
    </reaction>
</comment>
<comment type="catalytic activity">
    <reaction evidence="2">
        <text>a 5-formyl-2'-deoxycytidine in DNA + 2-oxoglutarate + O2 = a 5-carboxyl-2'-deoxycytidine in DNA + succinate + CO2 + H(+)</text>
        <dbReference type="Rhea" id="RHEA:53832"/>
        <dbReference type="Rhea" id="RHEA-COMP:13656"/>
        <dbReference type="Rhea" id="RHEA-COMP:13657"/>
        <dbReference type="ChEBI" id="CHEBI:15378"/>
        <dbReference type="ChEBI" id="CHEBI:15379"/>
        <dbReference type="ChEBI" id="CHEBI:16526"/>
        <dbReference type="ChEBI" id="CHEBI:16810"/>
        <dbReference type="ChEBI" id="CHEBI:30031"/>
        <dbReference type="ChEBI" id="CHEBI:137731"/>
        <dbReference type="ChEBI" id="CHEBI:137732"/>
        <dbReference type="EC" id="1.14.11.80"/>
    </reaction>
</comment>
<comment type="cofactor">
    <cofactor evidence="2">
        <name>Fe(2+)</name>
        <dbReference type="ChEBI" id="CHEBI:29033"/>
    </cofactor>
    <text evidence="2">Binds 1 Fe(2+) ion per subunit.</text>
</comment>
<comment type="cofactor">
    <cofactor evidence="2">
        <name>Zn(2+)</name>
        <dbReference type="ChEBI" id="CHEBI:29105"/>
    </cofactor>
    <text evidence="2">The zinc ions have a structural role.</text>
</comment>
<comment type="subcellular location">
    <subcellularLocation>
        <location evidence="1">Nucleus</location>
    </subcellularLocation>
    <subcellularLocation>
        <location evidence="1">Chromosome</location>
    </subcellularLocation>
    <text evidence="1">Detected on chromatin, where it binds to target gene promoters.</text>
</comment>
<comment type="tissue specificity">
    <text evidence="6">Detected in embryo (at protein level). Detected in embryonic head, in developing brain and eye.</text>
</comment>
<comment type="developmental stage">
    <text evidence="6">Expression in oocytes is very low. Barely detectable from stage 2 (2-cell stage) to stage 9. Increases strongly from stage 9 to 17, and decreases again at stage 25.</text>
</comment>
<comment type="domain">
    <text evidence="1">Binds target DNA that contains at least one unmethylated cytosine via the CXXC-type zinc-finger domain.</text>
</comment>
<comment type="disruption phenotype">
    <text evidence="6">Morpholino knockdown of both tet3-a and tet3-b causes defects in embryonic development, including malformations of the eye (eyeless), small head, and missing pigmentation along the lateral body, leading to embryonic death between stages 35 and 40.</text>
</comment>
<comment type="similarity">
    <text evidence="7">Belongs to the TET family.</text>
</comment>
<protein>
    <recommendedName>
        <fullName>Methylcytosine dioxygenase tet3-B</fullName>
        <ecNumber evidence="6">1.14.11.80</ecNumber>
    </recommendedName>
</protein>
<proteinExistence type="evidence at protein level"/>